<dbReference type="EMBL" id="AE008917">
    <property type="protein sequence ID" value="AAL52481.1"/>
    <property type="molecule type" value="Genomic_DNA"/>
</dbReference>
<dbReference type="PIR" id="AF3414">
    <property type="entry name" value="AF3414"/>
</dbReference>
<dbReference type="RefSeq" id="WP_002963791.1">
    <property type="nucleotide sequence ID" value="NZ_GG703778.1"/>
</dbReference>
<dbReference type="SMR" id="P66858"/>
<dbReference type="GeneID" id="97534023"/>
<dbReference type="KEGG" id="bme:BMEI1300"/>
<dbReference type="KEGG" id="bmel:DK63_105"/>
<dbReference type="PATRIC" id="fig|224914.52.peg.110"/>
<dbReference type="eggNOG" id="COG0691">
    <property type="taxonomic scope" value="Bacteria"/>
</dbReference>
<dbReference type="PhylomeDB" id="P66858"/>
<dbReference type="Proteomes" id="UP000000419">
    <property type="component" value="Chromosome I"/>
</dbReference>
<dbReference type="GO" id="GO:0005829">
    <property type="term" value="C:cytosol"/>
    <property type="evidence" value="ECO:0007669"/>
    <property type="project" value="TreeGrafter"/>
</dbReference>
<dbReference type="GO" id="GO:0003723">
    <property type="term" value="F:RNA binding"/>
    <property type="evidence" value="ECO:0007669"/>
    <property type="project" value="UniProtKB-UniRule"/>
</dbReference>
<dbReference type="GO" id="GO:0070929">
    <property type="term" value="P:trans-translation"/>
    <property type="evidence" value="ECO:0007669"/>
    <property type="project" value="UniProtKB-UniRule"/>
</dbReference>
<dbReference type="CDD" id="cd09294">
    <property type="entry name" value="SmpB"/>
    <property type="match status" value="1"/>
</dbReference>
<dbReference type="Gene3D" id="2.40.280.10">
    <property type="match status" value="1"/>
</dbReference>
<dbReference type="HAMAP" id="MF_00023">
    <property type="entry name" value="SmpB"/>
    <property type="match status" value="1"/>
</dbReference>
<dbReference type="InterPro" id="IPR023620">
    <property type="entry name" value="SmpB"/>
</dbReference>
<dbReference type="InterPro" id="IPR000037">
    <property type="entry name" value="SsrA-bd_prot"/>
</dbReference>
<dbReference type="InterPro" id="IPR020081">
    <property type="entry name" value="SsrA-bd_prot_CS"/>
</dbReference>
<dbReference type="NCBIfam" id="NF003843">
    <property type="entry name" value="PRK05422.1"/>
    <property type="match status" value="1"/>
</dbReference>
<dbReference type="NCBIfam" id="TIGR00086">
    <property type="entry name" value="smpB"/>
    <property type="match status" value="1"/>
</dbReference>
<dbReference type="PANTHER" id="PTHR30308:SF2">
    <property type="entry name" value="SSRA-BINDING PROTEIN"/>
    <property type="match status" value="1"/>
</dbReference>
<dbReference type="PANTHER" id="PTHR30308">
    <property type="entry name" value="TMRNA-BINDING COMPONENT OF TRANS-TRANSLATION TAGGING COMPLEX"/>
    <property type="match status" value="1"/>
</dbReference>
<dbReference type="Pfam" id="PF01668">
    <property type="entry name" value="SmpB"/>
    <property type="match status" value="1"/>
</dbReference>
<dbReference type="SUPFAM" id="SSF74982">
    <property type="entry name" value="Small protein B (SmpB)"/>
    <property type="match status" value="1"/>
</dbReference>
<dbReference type="PROSITE" id="PS01317">
    <property type="entry name" value="SSRP"/>
    <property type="match status" value="1"/>
</dbReference>
<feature type="chain" id="PRO_0000102918" description="SsrA-binding protein">
    <location>
        <begin position="1"/>
        <end position="158"/>
    </location>
</feature>
<feature type="region of interest" description="Disordered" evidence="2">
    <location>
        <begin position="131"/>
        <end position="158"/>
    </location>
</feature>
<feature type="compositionally biased region" description="Basic and acidic residues" evidence="2">
    <location>
        <begin position="136"/>
        <end position="158"/>
    </location>
</feature>
<protein>
    <recommendedName>
        <fullName evidence="1">SsrA-binding protein</fullName>
    </recommendedName>
    <alternativeName>
        <fullName evidence="1">Small protein B</fullName>
    </alternativeName>
</protein>
<keyword id="KW-0963">Cytoplasm</keyword>
<keyword id="KW-0694">RNA-binding</keyword>
<accession>P66858</accession>
<accession>Q8YG61</accession>
<proteinExistence type="inferred from homology"/>
<name>SSRP_BRUME</name>
<sequence length="158" mass="18570">MNKPKNSPARKMIAENRKARFNFEILDTLEAGLVLTGTEVKSLRANQANIAESYASFEDGEFWLINSYIPEYTQGNRFNHEPRRLRKLLVSRREMSRLFNSVSREGMTVVPLKLYFNDRGRAKLELALARGKKTHDKRETEKKRDWNREKARLLRDRG</sequence>
<organism>
    <name type="scientific">Brucella melitensis biotype 1 (strain ATCC 23456 / CCUG 17765 / NCTC 10094 / 16M)</name>
    <dbReference type="NCBI Taxonomy" id="224914"/>
    <lineage>
        <taxon>Bacteria</taxon>
        <taxon>Pseudomonadati</taxon>
        <taxon>Pseudomonadota</taxon>
        <taxon>Alphaproteobacteria</taxon>
        <taxon>Hyphomicrobiales</taxon>
        <taxon>Brucellaceae</taxon>
        <taxon>Brucella/Ochrobactrum group</taxon>
        <taxon>Brucella</taxon>
    </lineage>
</organism>
<evidence type="ECO:0000255" key="1">
    <source>
        <dbReference type="HAMAP-Rule" id="MF_00023"/>
    </source>
</evidence>
<evidence type="ECO:0000256" key="2">
    <source>
        <dbReference type="SAM" id="MobiDB-lite"/>
    </source>
</evidence>
<gene>
    <name evidence="1" type="primary">smpB</name>
    <name type="ordered locus">BMEI1300</name>
</gene>
<reference key="1">
    <citation type="journal article" date="2002" name="Proc. Natl. Acad. Sci. U.S.A.">
        <title>The genome sequence of the facultative intracellular pathogen Brucella melitensis.</title>
        <authorList>
            <person name="DelVecchio V.G."/>
            <person name="Kapatral V."/>
            <person name="Redkar R.J."/>
            <person name="Patra G."/>
            <person name="Mujer C."/>
            <person name="Los T."/>
            <person name="Ivanova N."/>
            <person name="Anderson I."/>
            <person name="Bhattacharyya A."/>
            <person name="Lykidis A."/>
            <person name="Reznik G."/>
            <person name="Jablonski L."/>
            <person name="Larsen N."/>
            <person name="D'Souza M."/>
            <person name="Bernal A."/>
            <person name="Mazur M."/>
            <person name="Goltsman E."/>
            <person name="Selkov E."/>
            <person name="Elzer P.H."/>
            <person name="Hagius S."/>
            <person name="O'Callaghan D."/>
            <person name="Letesson J.-J."/>
            <person name="Haselkorn R."/>
            <person name="Kyrpides N.C."/>
            <person name="Overbeek R."/>
        </authorList>
    </citation>
    <scope>NUCLEOTIDE SEQUENCE [LARGE SCALE GENOMIC DNA]</scope>
    <source>
        <strain>ATCC 23456 / CCUG 17765 / NCTC 10094 / 16M</strain>
    </source>
</reference>
<comment type="function">
    <text evidence="1">Required for rescue of stalled ribosomes mediated by trans-translation. Binds to transfer-messenger RNA (tmRNA), required for stable association of tmRNA with ribosomes. tmRNA and SmpB together mimic tRNA shape, replacing the anticodon stem-loop with SmpB. tmRNA is encoded by the ssrA gene; the 2 termini fold to resemble tRNA(Ala) and it encodes a 'tag peptide', a short internal open reading frame. During trans-translation Ala-aminoacylated tmRNA acts like a tRNA, entering the A-site of stalled ribosomes, displacing the stalled mRNA. The ribosome then switches to translate the ORF on the tmRNA; the nascent peptide is terminated with the 'tag peptide' encoded by the tmRNA and targeted for degradation. The ribosome is freed to recommence translation, which seems to be the essential function of trans-translation.</text>
</comment>
<comment type="subcellular location">
    <subcellularLocation>
        <location evidence="1">Cytoplasm</location>
    </subcellularLocation>
    <text evidence="1">The tmRNA-SmpB complex associates with stalled 70S ribosomes.</text>
</comment>
<comment type="similarity">
    <text evidence="1">Belongs to the SmpB family.</text>
</comment>